<evidence type="ECO:0000250" key="1"/>
<evidence type="ECO:0000250" key="2">
    <source>
        <dbReference type="UniProtKB" id="P04896"/>
    </source>
</evidence>
<evidence type="ECO:0000250" key="3">
    <source>
        <dbReference type="UniProtKB" id="P63092"/>
    </source>
</evidence>
<evidence type="ECO:0000250" key="4">
    <source>
        <dbReference type="UniProtKB" id="P63094"/>
    </source>
</evidence>
<evidence type="ECO:0000255" key="5">
    <source>
        <dbReference type="PROSITE-ProRule" id="PRU01230"/>
    </source>
</evidence>
<evidence type="ECO:0000256" key="6">
    <source>
        <dbReference type="SAM" id="MobiDB-lite"/>
    </source>
</evidence>
<evidence type="ECO:0000305" key="7"/>
<accession>P24799</accession>
<keyword id="KW-1003">Cell membrane</keyword>
<keyword id="KW-0342">GTP-binding</keyword>
<keyword id="KW-0449">Lipoprotein</keyword>
<keyword id="KW-0460">Magnesium</keyword>
<keyword id="KW-0472">Membrane</keyword>
<keyword id="KW-0479">Metal-binding</keyword>
<keyword id="KW-0547">Nucleotide-binding</keyword>
<keyword id="KW-0564">Palmitate</keyword>
<keyword id="KW-1185">Reference proteome</keyword>
<keyword id="KW-0807">Transducer</keyword>
<dbReference type="EMBL" id="X56091">
    <property type="protein sequence ID" value="CAA39571.1"/>
    <property type="molecule type" value="mRNA"/>
</dbReference>
<dbReference type="PIR" id="S11047">
    <property type="entry name" value="RGXLA"/>
</dbReference>
<dbReference type="RefSeq" id="NP_001095223.1">
    <property type="nucleotide sequence ID" value="NM_001101753.1"/>
</dbReference>
<dbReference type="SMR" id="P24799"/>
<dbReference type="SwissPalm" id="P24799"/>
<dbReference type="GeneID" id="394414"/>
<dbReference type="KEGG" id="xla:394414"/>
<dbReference type="AGR" id="Xenbase:XB-GENE-947780"/>
<dbReference type="CTD" id="394414"/>
<dbReference type="Xenbase" id="XB-GENE-947780">
    <property type="gene designation" value="gnas.S"/>
</dbReference>
<dbReference type="OrthoDB" id="5817230at2759"/>
<dbReference type="Proteomes" id="UP000186698">
    <property type="component" value="Chromosome 9_10S"/>
</dbReference>
<dbReference type="Bgee" id="394414">
    <property type="expression patterns" value="Expressed in neurula embryo and 19 other cell types or tissues"/>
</dbReference>
<dbReference type="GO" id="GO:0005737">
    <property type="term" value="C:cytoplasm"/>
    <property type="evidence" value="ECO:0000318"/>
    <property type="project" value="GO_Central"/>
</dbReference>
<dbReference type="GO" id="GO:0005834">
    <property type="term" value="C:heterotrimeric G-protein complex"/>
    <property type="evidence" value="ECO:0000318"/>
    <property type="project" value="GO_Central"/>
</dbReference>
<dbReference type="GO" id="GO:0031698">
    <property type="term" value="F:beta-2 adrenergic receptor binding"/>
    <property type="evidence" value="ECO:0000318"/>
    <property type="project" value="GO_Central"/>
</dbReference>
<dbReference type="GO" id="GO:0051430">
    <property type="term" value="F:corticotropin-releasing hormone receptor 1 binding"/>
    <property type="evidence" value="ECO:0000318"/>
    <property type="project" value="GO_Central"/>
</dbReference>
<dbReference type="GO" id="GO:0031748">
    <property type="term" value="F:D1 dopamine receptor binding"/>
    <property type="evidence" value="ECO:0000318"/>
    <property type="project" value="GO_Central"/>
</dbReference>
<dbReference type="GO" id="GO:0031683">
    <property type="term" value="F:G-protein beta/gamma-subunit complex binding"/>
    <property type="evidence" value="ECO:0000318"/>
    <property type="project" value="GO_Central"/>
</dbReference>
<dbReference type="GO" id="GO:0005525">
    <property type="term" value="F:GTP binding"/>
    <property type="evidence" value="ECO:0007669"/>
    <property type="project" value="UniProtKB-KW"/>
</dbReference>
<dbReference type="GO" id="GO:0003924">
    <property type="term" value="F:GTPase activity"/>
    <property type="evidence" value="ECO:0000318"/>
    <property type="project" value="GO_Central"/>
</dbReference>
<dbReference type="GO" id="GO:0005159">
    <property type="term" value="F:insulin-like growth factor receptor binding"/>
    <property type="evidence" value="ECO:0000318"/>
    <property type="project" value="GO_Central"/>
</dbReference>
<dbReference type="GO" id="GO:0035255">
    <property type="term" value="F:ionotropic glutamate receptor binding"/>
    <property type="evidence" value="ECO:0000318"/>
    <property type="project" value="GO_Central"/>
</dbReference>
<dbReference type="GO" id="GO:0046872">
    <property type="term" value="F:metal ion binding"/>
    <property type="evidence" value="ECO:0007669"/>
    <property type="project" value="UniProtKB-KW"/>
</dbReference>
<dbReference type="GO" id="GO:0031852">
    <property type="term" value="F:mu-type opioid receptor binding"/>
    <property type="evidence" value="ECO:0000318"/>
    <property type="project" value="GO_Central"/>
</dbReference>
<dbReference type="GO" id="GO:0007191">
    <property type="term" value="P:adenylate cyclase-activating dopamine receptor signaling pathway"/>
    <property type="evidence" value="ECO:0000318"/>
    <property type="project" value="GO_Central"/>
</dbReference>
<dbReference type="GO" id="GO:0007606">
    <property type="term" value="P:sensory perception of chemical stimulus"/>
    <property type="evidence" value="ECO:0000318"/>
    <property type="project" value="GO_Central"/>
</dbReference>
<dbReference type="CDD" id="cd00066">
    <property type="entry name" value="G-alpha"/>
    <property type="match status" value="1"/>
</dbReference>
<dbReference type="FunFam" id="3.40.50.300:FF:000720">
    <property type="entry name" value="Guanine nucleotide-binding protein G(k) subunit alpha"/>
    <property type="match status" value="1"/>
</dbReference>
<dbReference type="FunFam" id="1.10.400.10:FF:000003">
    <property type="entry name" value="Guanine nucleotide-binding protein G(S) subunit alpha"/>
    <property type="match status" value="1"/>
</dbReference>
<dbReference type="FunFam" id="3.40.50.300:FF:006178">
    <property type="entry name" value="Guanine nucleotide-binding protein G(s) subunit alpha isoforms short"/>
    <property type="match status" value="1"/>
</dbReference>
<dbReference type="Gene3D" id="1.10.400.10">
    <property type="entry name" value="GI Alpha 1, domain 2-like"/>
    <property type="match status" value="1"/>
</dbReference>
<dbReference type="Gene3D" id="3.40.50.300">
    <property type="entry name" value="P-loop containing nucleotide triphosphate hydrolases"/>
    <property type="match status" value="1"/>
</dbReference>
<dbReference type="InterPro" id="IPR000367">
    <property type="entry name" value="Gprotein_alpha_S"/>
</dbReference>
<dbReference type="InterPro" id="IPR001019">
    <property type="entry name" value="Gprotein_alpha_su"/>
</dbReference>
<dbReference type="InterPro" id="IPR011025">
    <property type="entry name" value="GproteinA_insert"/>
</dbReference>
<dbReference type="InterPro" id="IPR027417">
    <property type="entry name" value="P-loop_NTPase"/>
</dbReference>
<dbReference type="PANTHER" id="PTHR10218">
    <property type="entry name" value="GTP-BINDING PROTEIN ALPHA SUBUNIT"/>
    <property type="match status" value="1"/>
</dbReference>
<dbReference type="PANTHER" id="PTHR10218:SF357">
    <property type="entry name" value="GUANINE NUCLEOTIDE-BINDING PROTEIN G(S) SUBUNIT ALPHA"/>
    <property type="match status" value="1"/>
</dbReference>
<dbReference type="Pfam" id="PF00503">
    <property type="entry name" value="G-alpha"/>
    <property type="match status" value="1"/>
</dbReference>
<dbReference type="PRINTS" id="PR00318">
    <property type="entry name" value="GPROTEINA"/>
</dbReference>
<dbReference type="PRINTS" id="PR00443">
    <property type="entry name" value="GPROTEINAS"/>
</dbReference>
<dbReference type="SMART" id="SM00275">
    <property type="entry name" value="G_alpha"/>
    <property type="match status" value="1"/>
</dbReference>
<dbReference type="SUPFAM" id="SSF52540">
    <property type="entry name" value="P-loop containing nucleoside triphosphate hydrolases"/>
    <property type="match status" value="1"/>
</dbReference>
<dbReference type="SUPFAM" id="SSF47895">
    <property type="entry name" value="Transducin (alpha subunit), insertion domain"/>
    <property type="match status" value="1"/>
</dbReference>
<dbReference type="PROSITE" id="PS51882">
    <property type="entry name" value="G_ALPHA"/>
    <property type="match status" value="1"/>
</dbReference>
<comment type="function">
    <text evidence="3">Guanine nucleotide-binding proteins (G proteins) function as transducers in numerous signaling pathways controlled by G protein-coupled receptors (GPCRs). Signaling involves the activation of adenylyl cyclases, resulting in increased levels of the signaling molecule cAMP. GNAS functions downstream of several GPCRs, including beta-adrenergic receptors. Stimulates the Ras signaling pathway.</text>
</comment>
<comment type="subunit">
    <text evidence="3">Heterotrimeric G proteins are composed of 3 units; alpha, beta and gamma. The alpha chain contains the guanine nucleotide binding site (By similarity).</text>
</comment>
<comment type="subcellular location">
    <subcellularLocation>
        <location evidence="4">Cell membrane</location>
        <topology evidence="4">Lipid-anchor</topology>
    </subcellularLocation>
</comment>
<comment type="similarity">
    <text evidence="7">Belongs to the G-alpha family. G(s) subfamily.</text>
</comment>
<reference key="1">
    <citation type="journal article" date="1990" name="FEBS Lett.">
        <title>Molecular cloning and sequence determination of four different cDNA species coding for alpha-subunits of G proteins from Xenopus laevis oocytes.</title>
        <authorList>
            <person name="Olate J."/>
            <person name="Martinez S."/>
            <person name="Purcell P."/>
            <person name="Jorquera H."/>
            <person name="Codina J."/>
            <person name="Birnbaumer L."/>
            <person name="Allende J.E."/>
        </authorList>
    </citation>
    <scope>NUCLEOTIDE SEQUENCE [MRNA]</scope>
    <source>
        <tissue>Oocyte</tissue>
    </source>
</reference>
<protein>
    <recommendedName>
        <fullName>Guanine nucleotide-binding protein G(s) subunit alpha</fullName>
    </recommendedName>
    <alternativeName>
        <fullName>Adenylate cyclase-stimulating G alpha protein</fullName>
    </alternativeName>
</protein>
<organism>
    <name type="scientific">Xenopus laevis</name>
    <name type="common">African clawed frog</name>
    <dbReference type="NCBI Taxonomy" id="8355"/>
    <lineage>
        <taxon>Eukaryota</taxon>
        <taxon>Metazoa</taxon>
        <taxon>Chordata</taxon>
        <taxon>Craniata</taxon>
        <taxon>Vertebrata</taxon>
        <taxon>Euteleostomi</taxon>
        <taxon>Amphibia</taxon>
        <taxon>Batrachia</taxon>
        <taxon>Anura</taxon>
        <taxon>Pipoidea</taxon>
        <taxon>Pipidae</taxon>
        <taxon>Xenopodinae</taxon>
        <taxon>Xenopus</taxon>
        <taxon>Xenopus</taxon>
    </lineage>
</organism>
<proteinExistence type="evidence at transcript level"/>
<name>GNAS_XENLA</name>
<gene>
    <name type="primary">gnas</name>
</gene>
<sequence>MGCLGNSKTEDQRNEEKVQRETNKKIEKQLQKDKQVYRATHRLLLLGAGESGKSSIVKQMRILHVNGFNAEEKKTKVQDIKNNIKEAIETIVTAMGNLSPPVELVNPENQFRIDYILNLPNYKDFEFSPEFYEHTKTLWQDEGVRACYERSNEYQLIDCAQYFLDKIDIVKQNDYTPSDQDLLRCRVLTSGIFETKFQVDKVNFHMFDVGGQRDERRKWIQCFNDVTAIIFVVASSSYNMVIREDNHTNRLQEALNLFKSIWNNRWLRTISVILFLNKQDLLAEKVNAGKSKIEDYFPEFARYTTPDDATPEVGEDPRVTRAKYFIRDEFLRISTASGDGRHYCYPHFTCAVDTENIRRVFNDCRDIIQRMHLRQYELL</sequence>
<feature type="initiator methionine" description="Removed" evidence="1">
    <location>
        <position position="1"/>
    </location>
</feature>
<feature type="chain" id="PRO_0000203730" description="Guanine nucleotide-binding protein G(s) subunit alpha">
    <location>
        <begin position="2"/>
        <end position="379"/>
    </location>
</feature>
<feature type="domain" description="G-alpha" evidence="5">
    <location>
        <begin position="39"/>
        <end position="379"/>
    </location>
</feature>
<feature type="region of interest" description="Disordered" evidence="6">
    <location>
        <begin position="1"/>
        <end position="25"/>
    </location>
</feature>
<feature type="region of interest" description="G1 motif" evidence="5">
    <location>
        <begin position="42"/>
        <end position="55"/>
    </location>
</feature>
<feature type="region of interest" description="G2 motif" evidence="5">
    <location>
        <begin position="181"/>
        <end position="189"/>
    </location>
</feature>
<feature type="region of interest" description="G3 motif" evidence="5">
    <location>
        <begin position="204"/>
        <end position="213"/>
    </location>
</feature>
<feature type="region of interest" description="G4 motif" evidence="5">
    <location>
        <begin position="273"/>
        <end position="280"/>
    </location>
</feature>
<feature type="region of interest" description="G5 motif" evidence="5">
    <location>
        <begin position="349"/>
        <end position="354"/>
    </location>
</feature>
<feature type="compositionally biased region" description="Basic and acidic residues" evidence="6">
    <location>
        <begin position="8"/>
        <end position="25"/>
    </location>
</feature>
<feature type="binding site" evidence="2">
    <location>
        <begin position="47"/>
        <end position="55"/>
    </location>
    <ligand>
        <name>GTP</name>
        <dbReference type="ChEBI" id="CHEBI:37565"/>
    </ligand>
</feature>
<feature type="binding site" evidence="2">
    <location>
        <position position="54"/>
    </location>
    <ligand>
        <name>Mg(2+)</name>
        <dbReference type="ChEBI" id="CHEBI:18420"/>
    </ligand>
</feature>
<feature type="binding site" evidence="2">
    <location>
        <begin position="182"/>
        <end position="189"/>
    </location>
    <ligand>
        <name>GTP</name>
        <dbReference type="ChEBI" id="CHEBI:37565"/>
    </ligand>
</feature>
<feature type="binding site" evidence="2">
    <location>
        <position position="189"/>
    </location>
    <ligand>
        <name>Mg(2+)</name>
        <dbReference type="ChEBI" id="CHEBI:18420"/>
    </ligand>
</feature>
<feature type="binding site" evidence="2">
    <location>
        <begin position="208"/>
        <end position="212"/>
    </location>
    <ligand>
        <name>GTP</name>
        <dbReference type="ChEBI" id="CHEBI:37565"/>
    </ligand>
</feature>
<feature type="binding site" evidence="2">
    <location>
        <begin position="277"/>
        <end position="280"/>
    </location>
    <ligand>
        <name>GTP</name>
        <dbReference type="ChEBI" id="CHEBI:37565"/>
    </ligand>
</feature>
<feature type="binding site" evidence="2">
    <location>
        <position position="351"/>
    </location>
    <ligand>
        <name>GTP</name>
        <dbReference type="ChEBI" id="CHEBI:37565"/>
    </ligand>
</feature>
<feature type="lipid moiety-binding region" description="N-palmitoyl glycine" evidence="1">
    <location>
        <position position="2"/>
    </location>
</feature>
<feature type="lipid moiety-binding region" description="S-palmitoyl cysteine" evidence="1">
    <location>
        <position position="3"/>
    </location>
</feature>